<proteinExistence type="inferred from homology"/>
<evidence type="ECO:0000250" key="1"/>
<evidence type="ECO:0000305" key="2"/>
<comment type="function">
    <text evidence="1">DNA-dependent RNA polymerase catalyzes the transcription of DNA into RNA using the four ribonucleoside triphosphates as substrates. Largest and catalytic core component of RNA polymerase III which synthesizes small RNAs, such as 5S rRNA and tRNAs. Forms the polymerase active center together with the second largest subunit. A single-stranded DNA template strand of the promoter is positioned within the central active site cleft of Pol III. A bridging helix emanates from RPC1 and crosses the cleft near the catalytic site and is thought to promote translocation of Pol III by acting as a ratchet that moves the RNA-DNA hybrid through the active site by switching from straight to bent conformations at each step of nucleotide addition (By similarity).</text>
</comment>
<comment type="catalytic activity">
    <reaction>
        <text>RNA(n) + a ribonucleoside 5'-triphosphate = RNA(n+1) + diphosphate</text>
        <dbReference type="Rhea" id="RHEA:21248"/>
        <dbReference type="Rhea" id="RHEA-COMP:14527"/>
        <dbReference type="Rhea" id="RHEA-COMP:17342"/>
        <dbReference type="ChEBI" id="CHEBI:33019"/>
        <dbReference type="ChEBI" id="CHEBI:61557"/>
        <dbReference type="ChEBI" id="CHEBI:140395"/>
        <dbReference type="EC" id="2.7.7.6"/>
    </reaction>
</comment>
<comment type="subunit">
    <text evidence="1">Component of the RNA polymerase III (Pol III) complex consisting of 17 subunits.</text>
</comment>
<comment type="subcellular location">
    <subcellularLocation>
        <location evidence="1">Nucleus</location>
    </subcellularLocation>
</comment>
<comment type="similarity">
    <text evidence="2">Belongs to the RNA polymerase beta' chain family.</text>
</comment>
<sequence length="1450" mass="163727">MIELLKEDDAPKKIGHIQFGLLSEDDIVRLSHVQIVNRELFDLVKRKPTPYGVLDNKLGTSDKQAMCTTCGLSIVDCVGHFGYIKLQLPVFHIGYLKNIMNILQMICKSCSTILLNEEKKQYYLRKMRNKKMDNLQRKSLLKKIFLECRKTKECLKCGSTNGMIKKSGAFKIIHEKYKGKTESLQDYYALYDDAIKYNPEMKSHIKKAQDDLNPLVALNLFKKISYQDIEIMNMDPVIGRPERLILTYMLVPPVSIRPSVPMDGGSGTNEDDLTMKLSEILHINEHIRSNVDRAEMSAIMEDWDYLQASCAIYINSDVPGLPLQMKPTKAVRGLSQRLKGKTGRFRGNLSGKRVDFSGRTVISPDPNLNIDEVAVPQLIALTMTYPERVTDYNIERLQKYVINGPDRHPGANYIIYADGVKKWLKFGNREKFAAELKIGDIVERHIIDGDIMLFNRQPSLHKLSIMSHKARVMPWRTLRFNECVCTPYNADFDGDEMNIHLPQTEEARAEATILMGVTNNLITPRNGEPLVAATQDFLTASYLISRRDAFYERYRFALMCTHFADANEHIDLPPPAILKPVELWTGKQIFEVLLRPSVKSHVLCNFETRSRTYSKNLYMCPKDGYVYFRNSELMCGSIDKSIIGGGNKNSLFHILMRDFSPTIAANCMTRLAKLCARFLGDQGFSIGIPDIKPAEDLDRKKREIIETAYKKCAVFLKDYESGSLQLSSGCSMEQTFEAKMNQTLSQIRDDCGKLCVNDLPNYNSPLIMGLCGSKGSNINIAQMICCVGQQIVNGTRIPNGFTNRTTPHFKHFAKNPKSKGFVSNSFYTGMIPTEFFFHTMGGREGLVDTAVKTAETGYMQRRLMKALEDLSTHYDYTVRDSIGGIVQFIYGDDGLDPAGMEAKDRPVDFLRAMMSVKSTRQCRNEPEMKPFEIRKLVESIIDSSKFEACTDLFKNEIRVFFNGNEKTKGYIQELISLRKQFKLSSFDLNDNEDEIIIEDNSPMDISTTTTTTTTTTTNNAVKITNITTDIEMNESNKEENDKIEKERIEKEKESKRLKLLGERFANEHVVNQIHRITKTQIELFLDICLDKYSRARIEPGTAVGAIGAQSIGEPGTQMTLKTFHFAGVASMNVTLGVPRIKEIINAAKNISTPIITASLNCDYDIRSARIVAGRIEKTTLGHVATHIKEVVKRAGCYLSIKIDKNFVDSLQLEINSKTISQSIASTKGLKLKPEQITTNGDYKLRIVPPANIREGSLYYLQFLKNNLPAVIVKGIPTVNRVVISKVDEKQERYQLLVEGYDLRAVMATPGIKGTHTTSNHIMECENTLGIETARNTIMSEIDMIMTSHGMSIDIRHVMLLADLMSFKGEILGITRFGIAKMKESVLMLASFEKTTDHLFDAAVHHRQDDIVGVSECIIMGVVIPLGTGLFKLLRKSNKNNLPKKSLLLQD</sequence>
<organism>
    <name type="scientific">Dictyostelium discoideum</name>
    <name type="common">Social amoeba</name>
    <dbReference type="NCBI Taxonomy" id="44689"/>
    <lineage>
        <taxon>Eukaryota</taxon>
        <taxon>Amoebozoa</taxon>
        <taxon>Evosea</taxon>
        <taxon>Eumycetozoa</taxon>
        <taxon>Dictyostelia</taxon>
        <taxon>Dictyosteliales</taxon>
        <taxon>Dictyosteliaceae</taxon>
        <taxon>Dictyostelium</taxon>
    </lineage>
</organism>
<gene>
    <name type="primary">polr3a</name>
    <name type="synonym">rpc1</name>
    <name type="ORF">DDB_G0277199</name>
</gene>
<protein>
    <recommendedName>
        <fullName>DNA-directed RNA polymerase III subunit rpc1</fullName>
        <shortName>RNA polymerase III subunit C1</shortName>
        <ecNumber>2.7.7.6</ecNumber>
    </recommendedName>
    <alternativeName>
        <fullName>DNA-directed RNA polymerase III subunit A</fullName>
    </alternativeName>
</protein>
<reference key="1">
    <citation type="journal article" date="2002" name="Nature">
        <title>Sequence and analysis of chromosome 2 of Dictyostelium discoideum.</title>
        <authorList>
            <person name="Gloeckner G."/>
            <person name="Eichinger L."/>
            <person name="Szafranski K."/>
            <person name="Pachebat J.A."/>
            <person name="Bankier A.T."/>
            <person name="Dear P.H."/>
            <person name="Lehmann R."/>
            <person name="Baumgart C."/>
            <person name="Parra G."/>
            <person name="Abril J.F."/>
            <person name="Guigo R."/>
            <person name="Kumpf K."/>
            <person name="Tunggal B."/>
            <person name="Cox E.C."/>
            <person name="Quail M.A."/>
            <person name="Platzer M."/>
            <person name="Rosenthal A."/>
            <person name="Noegel A.A."/>
        </authorList>
    </citation>
    <scope>NUCLEOTIDE SEQUENCE [LARGE SCALE GENOMIC DNA]</scope>
    <source>
        <strain>AX4</strain>
    </source>
</reference>
<reference key="2">
    <citation type="journal article" date="2005" name="Nature">
        <title>The genome of the social amoeba Dictyostelium discoideum.</title>
        <authorList>
            <person name="Eichinger L."/>
            <person name="Pachebat J.A."/>
            <person name="Gloeckner G."/>
            <person name="Rajandream M.A."/>
            <person name="Sucgang R."/>
            <person name="Berriman M."/>
            <person name="Song J."/>
            <person name="Olsen R."/>
            <person name="Szafranski K."/>
            <person name="Xu Q."/>
            <person name="Tunggal B."/>
            <person name="Kummerfeld S."/>
            <person name="Madera M."/>
            <person name="Konfortov B.A."/>
            <person name="Rivero F."/>
            <person name="Bankier A.T."/>
            <person name="Lehmann R."/>
            <person name="Hamlin N."/>
            <person name="Davies R."/>
            <person name="Gaudet P."/>
            <person name="Fey P."/>
            <person name="Pilcher K."/>
            <person name="Chen G."/>
            <person name="Saunders D."/>
            <person name="Sodergren E.J."/>
            <person name="Davis P."/>
            <person name="Kerhornou A."/>
            <person name="Nie X."/>
            <person name="Hall N."/>
            <person name="Anjard C."/>
            <person name="Hemphill L."/>
            <person name="Bason N."/>
            <person name="Farbrother P."/>
            <person name="Desany B."/>
            <person name="Just E."/>
            <person name="Morio T."/>
            <person name="Rost R."/>
            <person name="Churcher C.M."/>
            <person name="Cooper J."/>
            <person name="Haydock S."/>
            <person name="van Driessche N."/>
            <person name="Cronin A."/>
            <person name="Goodhead I."/>
            <person name="Muzny D.M."/>
            <person name="Mourier T."/>
            <person name="Pain A."/>
            <person name="Lu M."/>
            <person name="Harper D."/>
            <person name="Lindsay R."/>
            <person name="Hauser H."/>
            <person name="James K.D."/>
            <person name="Quiles M."/>
            <person name="Madan Babu M."/>
            <person name="Saito T."/>
            <person name="Buchrieser C."/>
            <person name="Wardroper A."/>
            <person name="Felder M."/>
            <person name="Thangavelu M."/>
            <person name="Johnson D."/>
            <person name="Knights A."/>
            <person name="Loulseged H."/>
            <person name="Mungall K.L."/>
            <person name="Oliver K."/>
            <person name="Price C."/>
            <person name="Quail M.A."/>
            <person name="Urushihara H."/>
            <person name="Hernandez J."/>
            <person name="Rabbinowitsch E."/>
            <person name="Steffen D."/>
            <person name="Sanders M."/>
            <person name="Ma J."/>
            <person name="Kohara Y."/>
            <person name="Sharp S."/>
            <person name="Simmonds M.N."/>
            <person name="Spiegler S."/>
            <person name="Tivey A."/>
            <person name="Sugano S."/>
            <person name="White B."/>
            <person name="Walker D."/>
            <person name="Woodward J.R."/>
            <person name="Winckler T."/>
            <person name="Tanaka Y."/>
            <person name="Shaulsky G."/>
            <person name="Schleicher M."/>
            <person name="Weinstock G.M."/>
            <person name="Rosenthal A."/>
            <person name="Cox E.C."/>
            <person name="Chisholm R.L."/>
            <person name="Gibbs R.A."/>
            <person name="Loomis W.F."/>
            <person name="Platzer M."/>
            <person name="Kay R.R."/>
            <person name="Williams J.G."/>
            <person name="Dear P.H."/>
            <person name="Noegel A.A."/>
            <person name="Barrell B.G."/>
            <person name="Kuspa A."/>
        </authorList>
    </citation>
    <scope>NUCLEOTIDE SEQUENCE [LARGE SCALE GENOMIC DNA]</scope>
    <source>
        <strain>AX4</strain>
    </source>
</reference>
<accession>Q86AQ5</accession>
<accession>Q54ZZ2</accession>
<dbReference type="EC" id="2.7.7.6"/>
<dbReference type="EMBL" id="AAFI02000019">
    <property type="protein sequence ID" value="EAL68785.1"/>
    <property type="molecule type" value="Genomic_DNA"/>
</dbReference>
<dbReference type="RefSeq" id="XP_642724.1">
    <property type="nucleotide sequence ID" value="XM_637632.1"/>
</dbReference>
<dbReference type="SMR" id="Q86AQ5"/>
<dbReference type="FunCoup" id="Q86AQ5">
    <property type="interactions" value="645"/>
</dbReference>
<dbReference type="STRING" id="44689.Q86AQ5"/>
<dbReference type="GlyGen" id="Q86AQ5">
    <property type="glycosylation" value="1 site"/>
</dbReference>
<dbReference type="PaxDb" id="44689-DDB0216293"/>
<dbReference type="EnsemblProtists" id="EAL68785">
    <property type="protein sequence ID" value="EAL68785"/>
    <property type="gene ID" value="DDB_G0277199"/>
</dbReference>
<dbReference type="GeneID" id="8620917"/>
<dbReference type="KEGG" id="ddi:DDB_G0277199"/>
<dbReference type="dictyBase" id="DDB_G0277199">
    <property type="gene designation" value="rpc1"/>
</dbReference>
<dbReference type="VEuPathDB" id="AmoebaDB:DDB_G0277199"/>
<dbReference type="eggNOG" id="KOG0261">
    <property type="taxonomic scope" value="Eukaryota"/>
</dbReference>
<dbReference type="HOGENOM" id="CLU_000487_3_0_1"/>
<dbReference type="InParanoid" id="Q86AQ5"/>
<dbReference type="OMA" id="AVCPPYN"/>
<dbReference type="PhylomeDB" id="Q86AQ5"/>
<dbReference type="Reactome" id="R-DDI-76061">
    <property type="pathway name" value="RNA Polymerase III Transcription Initiation From Type 1 Promoter"/>
</dbReference>
<dbReference type="Reactome" id="R-DDI-76066">
    <property type="pathway name" value="RNA Polymerase III Transcription Initiation From Type 2 Promoter"/>
</dbReference>
<dbReference type="PRO" id="PR:Q86AQ5"/>
<dbReference type="Proteomes" id="UP000002195">
    <property type="component" value="Chromosome 2"/>
</dbReference>
<dbReference type="GO" id="GO:0005739">
    <property type="term" value="C:mitochondrion"/>
    <property type="evidence" value="ECO:0007669"/>
    <property type="project" value="GOC"/>
</dbReference>
<dbReference type="GO" id="GO:0005666">
    <property type="term" value="C:RNA polymerase III complex"/>
    <property type="evidence" value="ECO:0000250"/>
    <property type="project" value="dictyBase"/>
</dbReference>
<dbReference type="GO" id="GO:0003677">
    <property type="term" value="F:DNA binding"/>
    <property type="evidence" value="ECO:0007669"/>
    <property type="project" value="InterPro"/>
</dbReference>
<dbReference type="GO" id="GO:0003899">
    <property type="term" value="F:DNA-directed RNA polymerase activity"/>
    <property type="evidence" value="ECO:0000250"/>
    <property type="project" value="dictyBase"/>
</dbReference>
<dbReference type="GO" id="GO:0046872">
    <property type="term" value="F:metal ion binding"/>
    <property type="evidence" value="ECO:0007669"/>
    <property type="project" value="UniProtKB-KW"/>
</dbReference>
<dbReference type="GO" id="GO:0006383">
    <property type="term" value="P:transcription by RNA polymerase III"/>
    <property type="evidence" value="ECO:0000250"/>
    <property type="project" value="dictyBase"/>
</dbReference>
<dbReference type="CDD" id="cd02736">
    <property type="entry name" value="RNAP_III_Rpc1_C"/>
    <property type="match status" value="1"/>
</dbReference>
<dbReference type="CDD" id="cd02583">
    <property type="entry name" value="RNAP_III_RPC1_N"/>
    <property type="match status" value="1"/>
</dbReference>
<dbReference type="FunFam" id="2.40.40.20:FF:000019">
    <property type="entry name" value="DNA-directed RNA polymerase II subunit RPB1"/>
    <property type="match status" value="1"/>
</dbReference>
<dbReference type="FunFam" id="1.10.132.30:FF:000001">
    <property type="entry name" value="DNA-directed RNA polymerase subunit"/>
    <property type="match status" value="1"/>
</dbReference>
<dbReference type="FunFam" id="1.10.150.390:FF:000004">
    <property type="entry name" value="DNA-directed RNA polymerase subunit"/>
    <property type="match status" value="1"/>
</dbReference>
<dbReference type="FunFam" id="1.10.274.100:FF:000008">
    <property type="entry name" value="DNA-directed RNA polymerase subunit"/>
    <property type="match status" value="1"/>
</dbReference>
<dbReference type="FunFam" id="3.30.1490.180:FF:000002">
    <property type="entry name" value="DNA-directed RNA polymerase subunit"/>
    <property type="match status" value="1"/>
</dbReference>
<dbReference type="FunFam" id="4.10.860.120:FF:000004">
    <property type="entry name" value="DNA-directed RNA polymerase subunit"/>
    <property type="match status" value="1"/>
</dbReference>
<dbReference type="Gene3D" id="1.10.132.30">
    <property type="match status" value="1"/>
</dbReference>
<dbReference type="Gene3D" id="1.10.150.390">
    <property type="match status" value="1"/>
</dbReference>
<dbReference type="Gene3D" id="2.40.40.20">
    <property type="match status" value="1"/>
</dbReference>
<dbReference type="Gene3D" id="6.10.250.2940">
    <property type="match status" value="1"/>
</dbReference>
<dbReference type="Gene3D" id="6.20.50.80">
    <property type="match status" value="1"/>
</dbReference>
<dbReference type="Gene3D" id="3.30.1490.180">
    <property type="entry name" value="RNA polymerase ii"/>
    <property type="match status" value="1"/>
</dbReference>
<dbReference type="Gene3D" id="4.10.860.120">
    <property type="entry name" value="RNA polymerase II, clamp domain"/>
    <property type="match status" value="1"/>
</dbReference>
<dbReference type="Gene3D" id="1.10.274.100">
    <property type="entry name" value="RNA polymerase Rpb1, domain 3"/>
    <property type="match status" value="1"/>
</dbReference>
<dbReference type="InterPro" id="IPR000722">
    <property type="entry name" value="RNA_pol_asu"/>
</dbReference>
<dbReference type="InterPro" id="IPR006592">
    <property type="entry name" value="RNA_pol_N"/>
</dbReference>
<dbReference type="InterPro" id="IPR007080">
    <property type="entry name" value="RNA_pol_Rpb1_1"/>
</dbReference>
<dbReference type="InterPro" id="IPR007066">
    <property type="entry name" value="RNA_pol_Rpb1_3"/>
</dbReference>
<dbReference type="InterPro" id="IPR042102">
    <property type="entry name" value="RNA_pol_Rpb1_3_sf"/>
</dbReference>
<dbReference type="InterPro" id="IPR007083">
    <property type="entry name" value="RNA_pol_Rpb1_4"/>
</dbReference>
<dbReference type="InterPro" id="IPR007081">
    <property type="entry name" value="RNA_pol_Rpb1_5"/>
</dbReference>
<dbReference type="InterPro" id="IPR044893">
    <property type="entry name" value="RNA_pol_Rpb1_clamp_domain"/>
</dbReference>
<dbReference type="InterPro" id="IPR035698">
    <property type="entry name" value="RNAP_III_Rpc1_C"/>
</dbReference>
<dbReference type="InterPro" id="IPR035697">
    <property type="entry name" value="RNAP_III_RPC1_N"/>
</dbReference>
<dbReference type="InterPro" id="IPR038120">
    <property type="entry name" value="Rpb1_funnel_sf"/>
</dbReference>
<dbReference type="InterPro" id="IPR015700">
    <property type="entry name" value="RPC1"/>
</dbReference>
<dbReference type="NCBIfam" id="NF006336">
    <property type="entry name" value="PRK08566.1"/>
    <property type="match status" value="1"/>
</dbReference>
<dbReference type="PANTHER" id="PTHR48446">
    <property type="entry name" value="DNA-DIRECTED RNA POLYMERASE SUBUNIT BETA' N-TERMINAL SECTION"/>
    <property type="match status" value="1"/>
</dbReference>
<dbReference type="PANTHER" id="PTHR48446:SF1">
    <property type="entry name" value="DNA-DIRECTED RNA POLYMERASE SUBUNIT BETA' N-TERMINAL SECTION"/>
    <property type="match status" value="1"/>
</dbReference>
<dbReference type="Pfam" id="PF04997">
    <property type="entry name" value="RNA_pol_Rpb1_1"/>
    <property type="match status" value="1"/>
</dbReference>
<dbReference type="Pfam" id="PF00623">
    <property type="entry name" value="RNA_pol_Rpb1_2"/>
    <property type="match status" value="1"/>
</dbReference>
<dbReference type="Pfam" id="PF04983">
    <property type="entry name" value="RNA_pol_Rpb1_3"/>
    <property type="match status" value="1"/>
</dbReference>
<dbReference type="Pfam" id="PF05000">
    <property type="entry name" value="RNA_pol_Rpb1_4"/>
    <property type="match status" value="1"/>
</dbReference>
<dbReference type="Pfam" id="PF04998">
    <property type="entry name" value="RNA_pol_Rpb1_5"/>
    <property type="match status" value="1"/>
</dbReference>
<dbReference type="SMART" id="SM00663">
    <property type="entry name" value="RPOLA_N"/>
    <property type="match status" value="1"/>
</dbReference>
<dbReference type="SUPFAM" id="SSF64484">
    <property type="entry name" value="beta and beta-prime subunits of DNA dependent RNA-polymerase"/>
    <property type="match status" value="1"/>
</dbReference>
<keyword id="KW-0240">DNA-directed RNA polymerase</keyword>
<keyword id="KW-0460">Magnesium</keyword>
<keyword id="KW-0479">Metal-binding</keyword>
<keyword id="KW-0548">Nucleotidyltransferase</keyword>
<keyword id="KW-0539">Nucleus</keyword>
<keyword id="KW-1185">Reference proteome</keyword>
<keyword id="KW-0804">Transcription</keyword>
<keyword id="KW-0808">Transferase</keyword>
<keyword id="KW-0862">Zinc</keyword>
<name>RPC1_DICDI</name>
<feature type="chain" id="PRO_0000330754" description="DNA-directed RNA polymerase III subunit rpc1">
    <location>
        <begin position="1"/>
        <end position="1450"/>
    </location>
</feature>
<feature type="region of interest" description="Bridging helix" evidence="1">
    <location>
        <begin position="832"/>
        <end position="844"/>
    </location>
</feature>
<feature type="binding site" evidence="1">
    <location>
        <position position="67"/>
    </location>
    <ligand>
        <name>Zn(2+)</name>
        <dbReference type="ChEBI" id="CHEBI:29105"/>
        <label>1</label>
    </ligand>
</feature>
<feature type="binding site" evidence="1">
    <location>
        <position position="70"/>
    </location>
    <ligand>
        <name>Zn(2+)</name>
        <dbReference type="ChEBI" id="CHEBI:29105"/>
        <label>1</label>
    </ligand>
</feature>
<feature type="binding site" evidence="1">
    <location>
        <position position="77"/>
    </location>
    <ligand>
        <name>Zn(2+)</name>
        <dbReference type="ChEBI" id="CHEBI:29105"/>
        <label>1</label>
    </ligand>
</feature>
<feature type="binding site" evidence="1">
    <location>
        <position position="80"/>
    </location>
    <ligand>
        <name>Zn(2+)</name>
        <dbReference type="ChEBI" id="CHEBI:29105"/>
        <label>1</label>
    </ligand>
</feature>
<feature type="binding site" evidence="1">
    <location>
        <position position="107"/>
    </location>
    <ligand>
        <name>Zn(2+)</name>
        <dbReference type="ChEBI" id="CHEBI:29105"/>
        <label>2</label>
    </ligand>
</feature>
<feature type="binding site" evidence="1">
    <location>
        <position position="110"/>
    </location>
    <ligand>
        <name>Zn(2+)</name>
        <dbReference type="ChEBI" id="CHEBI:29105"/>
        <label>2</label>
    </ligand>
</feature>
<feature type="binding site" evidence="1">
    <location>
        <position position="154"/>
    </location>
    <ligand>
        <name>Zn(2+)</name>
        <dbReference type="ChEBI" id="CHEBI:29105"/>
        <label>2</label>
    </ligand>
</feature>
<feature type="binding site" evidence="1">
    <location>
        <position position="491"/>
    </location>
    <ligand>
        <name>Mg(2+)</name>
        <dbReference type="ChEBI" id="CHEBI:18420"/>
        <note>catalytic</note>
    </ligand>
</feature>
<feature type="binding site" evidence="1">
    <location>
        <position position="493"/>
    </location>
    <ligand>
        <name>Mg(2+)</name>
        <dbReference type="ChEBI" id="CHEBI:18420"/>
        <note>catalytic</note>
    </ligand>
</feature>
<feature type="binding site" evidence="1">
    <location>
        <position position="495"/>
    </location>
    <ligand>
        <name>Mg(2+)</name>
        <dbReference type="ChEBI" id="CHEBI:18420"/>
        <note>catalytic</note>
    </ligand>
</feature>